<feature type="chain" id="PRO_0000437265" description="Uncharacterized protein SPAC29A4.23">
    <location>
        <begin position="1"/>
        <end position="162"/>
    </location>
</feature>
<dbReference type="EMBL" id="CU329670">
    <property type="status" value="NOT_ANNOTATED_CDS"/>
    <property type="molecule type" value="Genomic_DNA"/>
</dbReference>
<dbReference type="PomBase" id="SPAC29A4.23"/>
<dbReference type="VEuPathDB" id="FungiDB:SPAC29A4.23"/>
<dbReference type="InParanoid" id="P0CU25"/>
<dbReference type="PRO" id="PR:P0CU25"/>
<dbReference type="Proteomes" id="UP000002485">
    <property type="component" value="Chromosome I"/>
</dbReference>
<organism>
    <name type="scientific">Schizosaccharomyces pombe (strain 972 / ATCC 24843)</name>
    <name type="common">Fission yeast</name>
    <dbReference type="NCBI Taxonomy" id="284812"/>
    <lineage>
        <taxon>Eukaryota</taxon>
        <taxon>Fungi</taxon>
        <taxon>Dikarya</taxon>
        <taxon>Ascomycota</taxon>
        <taxon>Taphrinomycotina</taxon>
        <taxon>Schizosaccharomycetes</taxon>
        <taxon>Schizosaccharomycetales</taxon>
        <taxon>Schizosaccharomycetaceae</taxon>
        <taxon>Schizosaccharomyces</taxon>
    </lineage>
</organism>
<keyword id="KW-1185">Reference proteome</keyword>
<sequence>MKIDKAIFTNQFGVPLPSDNPYVALHDFVYDLEVAIPEDEFEAFKEQLANPRNSCIIFQTYEMLQELKDGQSSLREDLNHLSHGQNVLKKNMVYLNGTFECISNVIRANNQILMLEFGKSNRKSEEILNYKSAKQMNSNLSTIYRVLPLIKIFLMNIRNCLN</sequence>
<gene>
    <name type="ORF">SPAC29A4.23</name>
</gene>
<reference key="1">
    <citation type="journal article" date="2002" name="Nature">
        <title>The genome sequence of Schizosaccharomyces pombe.</title>
        <authorList>
            <person name="Wood V."/>
            <person name="Gwilliam R."/>
            <person name="Rajandream M.A."/>
            <person name="Lyne M.H."/>
            <person name="Lyne R."/>
            <person name="Stewart A."/>
            <person name="Sgouros J.G."/>
            <person name="Peat N."/>
            <person name="Hayles J."/>
            <person name="Baker S.G."/>
            <person name="Basham D."/>
            <person name="Bowman S."/>
            <person name="Brooks K."/>
            <person name="Brown D."/>
            <person name="Brown S."/>
            <person name="Chillingworth T."/>
            <person name="Churcher C.M."/>
            <person name="Collins M."/>
            <person name="Connor R."/>
            <person name="Cronin A."/>
            <person name="Davis P."/>
            <person name="Feltwell T."/>
            <person name="Fraser A."/>
            <person name="Gentles S."/>
            <person name="Goble A."/>
            <person name="Hamlin N."/>
            <person name="Harris D.E."/>
            <person name="Hidalgo J."/>
            <person name="Hodgson G."/>
            <person name="Holroyd S."/>
            <person name="Hornsby T."/>
            <person name="Howarth S."/>
            <person name="Huckle E.J."/>
            <person name="Hunt S."/>
            <person name="Jagels K."/>
            <person name="James K.D."/>
            <person name="Jones L."/>
            <person name="Jones M."/>
            <person name="Leather S."/>
            <person name="McDonald S."/>
            <person name="McLean J."/>
            <person name="Mooney P."/>
            <person name="Moule S."/>
            <person name="Mungall K.L."/>
            <person name="Murphy L.D."/>
            <person name="Niblett D."/>
            <person name="Odell C."/>
            <person name="Oliver K."/>
            <person name="O'Neil S."/>
            <person name="Pearson D."/>
            <person name="Quail M.A."/>
            <person name="Rabbinowitsch E."/>
            <person name="Rutherford K.M."/>
            <person name="Rutter S."/>
            <person name="Saunders D."/>
            <person name="Seeger K."/>
            <person name="Sharp S."/>
            <person name="Skelton J."/>
            <person name="Simmonds M.N."/>
            <person name="Squares R."/>
            <person name="Squares S."/>
            <person name="Stevens K."/>
            <person name="Taylor K."/>
            <person name="Taylor R.G."/>
            <person name="Tivey A."/>
            <person name="Walsh S.V."/>
            <person name="Warren T."/>
            <person name="Whitehead S."/>
            <person name="Woodward J.R."/>
            <person name="Volckaert G."/>
            <person name="Aert R."/>
            <person name="Robben J."/>
            <person name="Grymonprez B."/>
            <person name="Weltjens I."/>
            <person name="Vanstreels E."/>
            <person name="Rieger M."/>
            <person name="Schaefer M."/>
            <person name="Mueller-Auer S."/>
            <person name="Gabel C."/>
            <person name="Fuchs M."/>
            <person name="Duesterhoeft A."/>
            <person name="Fritzc C."/>
            <person name="Holzer E."/>
            <person name="Moestl D."/>
            <person name="Hilbert H."/>
            <person name="Borzym K."/>
            <person name="Langer I."/>
            <person name="Beck A."/>
            <person name="Lehrach H."/>
            <person name="Reinhardt R."/>
            <person name="Pohl T.M."/>
            <person name="Eger P."/>
            <person name="Zimmermann W."/>
            <person name="Wedler H."/>
            <person name="Wambutt R."/>
            <person name="Purnelle B."/>
            <person name="Goffeau A."/>
            <person name="Cadieu E."/>
            <person name="Dreano S."/>
            <person name="Gloux S."/>
            <person name="Lelaure V."/>
            <person name="Mottier S."/>
            <person name="Galibert F."/>
            <person name="Aves S.J."/>
            <person name="Xiang Z."/>
            <person name="Hunt C."/>
            <person name="Moore K."/>
            <person name="Hurst S.M."/>
            <person name="Lucas M."/>
            <person name="Rochet M."/>
            <person name="Gaillardin C."/>
            <person name="Tallada V.A."/>
            <person name="Garzon A."/>
            <person name="Thode G."/>
            <person name="Daga R.R."/>
            <person name="Cruzado L."/>
            <person name="Jimenez J."/>
            <person name="Sanchez M."/>
            <person name="del Rey F."/>
            <person name="Benito J."/>
            <person name="Dominguez A."/>
            <person name="Revuelta J.L."/>
            <person name="Moreno S."/>
            <person name="Armstrong J."/>
            <person name="Forsburg S.L."/>
            <person name="Cerutti L."/>
            <person name="Lowe T."/>
            <person name="McCombie W.R."/>
            <person name="Paulsen I."/>
            <person name="Potashkin J."/>
            <person name="Shpakovski G.V."/>
            <person name="Ussery D."/>
            <person name="Barrell B.G."/>
            <person name="Nurse P."/>
        </authorList>
    </citation>
    <scope>NUCLEOTIDE SEQUENCE [LARGE SCALE GENOMIC DNA]</scope>
    <source>
        <strain>972 / ATCC 24843</strain>
    </source>
</reference>
<reference key="2">
    <citation type="journal article" date="2015" name="DNA Res.">
        <title>AnABlast: a new in silico strategy for the genome-wide search of novel genes and fossil regions.</title>
        <authorList>
            <person name="Jimenez J."/>
            <person name="Duncan C.D."/>
            <person name="Gallardo M."/>
            <person name="Mata J."/>
            <person name="Perez-Pulido A.J."/>
        </authorList>
    </citation>
    <scope>IDENTIFICATION</scope>
</reference>
<name>YDPL_SCHPO</name>
<proteinExistence type="predicted"/>
<protein>
    <recommendedName>
        <fullName>Uncharacterized protein SPAC29A4.23</fullName>
    </recommendedName>
</protein>
<accession>P0CU25</accession>